<proteinExistence type="evidence at protein level"/>
<sequence length="877" mass="96261">MSSSSNTSSHRSYGLRRSQRSMNLNRATLLAPPTPSSLYDANNSTSSTSSQKPNTSFTSLFGPRKQTTSSPSFSHAAPLHPLSPPSFTHSQPQIQAQPVPRRPSLFDRPNLVSRSSSRLGDSPSLSPVAQVANPIHHTAPSPSDVRAFPIHKNASTGVKRSFFSSSMSNGAMSPPSHSPSPFLQSSQHIPPSTPAQKLRKKNNFDSFRISNSHISPFASGSFSPFATSSPNFLSTSTPAPPNSNNANPSTLFSSIPSSRHTTSNHFPSNSAQSSLFSPTARPLTARKLGFASSQTKSAVSNNHSRNSSKDASFMMKSFIPSNRSHPQTQQNESSLFSDNSMVNSSSNSFSLFPNATLPNPPSSELLTTPFQQIKPPSQVFMSTGLLSKQHRPRKNINFTPLPPSTPSKPSTFVRPHSSSTDSPPSPSTPSNTQTDSYFIQRENTPTNHNSIPTIQLEKSSMDFLRFDPPPSAVKTSHNYGLPFLSNQRCPATPTRNPFAFENTVSIHMDGRQPSPIKSRNNNQMSFAMEEEADVSQPSSSSFTLSFPSALTSSKVSSSTSHLLTRFRNVTLLGSGEFSEVFQVEDPVEKTLKYAVKKLKVKFSGPKERNRLLQEVSIQRALKGHDHIVELMDSWEHGGFLYMQVELCENGSLDRFLEEQGQLSRLDEFRVWKILVEVALGLQFIHHKNYVHLDLKPANVMITFEGTLKIGDFGMASVWPVPRGMEREGDCEYIAPEVLANHLYDKPADIFSLGITVFEAAANIVLPDNGQSWQKLRSGDLSDAPRLSSTDNGSSLTSSSRETPANSIIGQGGLDRVVEWMLSPEPRNRPTIDQILATDEVCWVEMRRKAGAIIYEGIHGSSSNPQGDQMMEDWQVNV</sequence>
<dbReference type="EC" id="2.7.10.2"/>
<dbReference type="EMBL" id="M16508">
    <property type="protein sequence ID" value="AAA35354.1"/>
    <property type="molecule type" value="Genomic_DNA"/>
</dbReference>
<dbReference type="EMBL" id="CU329672">
    <property type="protein sequence ID" value="CAB52150.1"/>
    <property type="molecule type" value="Genomic_DNA"/>
</dbReference>
<dbReference type="EMBL" id="AB027900">
    <property type="protein sequence ID" value="BAA87204.1"/>
    <property type="molecule type" value="Genomic_DNA"/>
</dbReference>
<dbReference type="PIR" id="A25962">
    <property type="entry name" value="A25962"/>
</dbReference>
<dbReference type="RefSeq" id="NP_587933.1">
    <property type="nucleotide sequence ID" value="NM_001022924.2"/>
</dbReference>
<dbReference type="SMR" id="P07527"/>
<dbReference type="BioGRID" id="275695">
    <property type="interactions" value="92"/>
</dbReference>
<dbReference type="DIP" id="DIP-16N"/>
<dbReference type="FunCoup" id="P07527">
    <property type="interactions" value="435"/>
</dbReference>
<dbReference type="STRING" id="284812.P07527"/>
<dbReference type="iPTMnet" id="P07527"/>
<dbReference type="SwissPalm" id="P07527"/>
<dbReference type="PaxDb" id="4896-SPCC18B5.03.1"/>
<dbReference type="EnsemblFungi" id="SPCC18B5.03.1">
    <property type="protein sequence ID" value="SPCC18B5.03.1:pep"/>
    <property type="gene ID" value="SPCC18B5.03"/>
</dbReference>
<dbReference type="GeneID" id="2539123"/>
<dbReference type="KEGG" id="spo:2539123"/>
<dbReference type="PomBase" id="SPCC18B5.03">
    <property type="gene designation" value="wee1"/>
</dbReference>
<dbReference type="VEuPathDB" id="FungiDB:SPCC18B5.03"/>
<dbReference type="eggNOG" id="KOG0601">
    <property type="taxonomic scope" value="Eukaryota"/>
</dbReference>
<dbReference type="HOGENOM" id="CLU_346520_0_0_1"/>
<dbReference type="InParanoid" id="P07527"/>
<dbReference type="OMA" id="MEDWQVN"/>
<dbReference type="Reactome" id="R-SPO-156711">
    <property type="pathway name" value="Polo-like kinase mediated events"/>
</dbReference>
<dbReference type="Reactome" id="R-SPO-69656">
    <property type="pathway name" value="Cyclin A:Cdk2-associated events at S phase entry"/>
</dbReference>
<dbReference type="PRO" id="PR:P07527"/>
<dbReference type="Proteomes" id="UP000002485">
    <property type="component" value="Chromosome III"/>
</dbReference>
<dbReference type="GO" id="GO:0110115">
    <property type="term" value="C:Cdr2 medial cortical node complex"/>
    <property type="evidence" value="ECO:0000269"/>
    <property type="project" value="PomBase"/>
</dbReference>
<dbReference type="GO" id="GO:0005737">
    <property type="term" value="C:cytoplasm"/>
    <property type="evidence" value="ECO:0000318"/>
    <property type="project" value="GO_Central"/>
</dbReference>
<dbReference type="GO" id="GO:0071341">
    <property type="term" value="C:medial cortical node"/>
    <property type="evidence" value="ECO:0000314"/>
    <property type="project" value="PomBase"/>
</dbReference>
<dbReference type="GO" id="GO:0044732">
    <property type="term" value="C:mitotic spindle pole body"/>
    <property type="evidence" value="ECO:0000314"/>
    <property type="project" value="PomBase"/>
</dbReference>
<dbReference type="GO" id="GO:0005654">
    <property type="term" value="C:nucleoplasm"/>
    <property type="evidence" value="ECO:0000304"/>
    <property type="project" value="Reactome"/>
</dbReference>
<dbReference type="GO" id="GO:0005634">
    <property type="term" value="C:nucleus"/>
    <property type="evidence" value="ECO:0000314"/>
    <property type="project" value="PomBase"/>
</dbReference>
<dbReference type="GO" id="GO:0005524">
    <property type="term" value="F:ATP binding"/>
    <property type="evidence" value="ECO:0007669"/>
    <property type="project" value="UniProtKB-KW"/>
</dbReference>
<dbReference type="GO" id="GO:0046872">
    <property type="term" value="F:metal ion binding"/>
    <property type="evidence" value="ECO:0007669"/>
    <property type="project" value="UniProtKB-KW"/>
</dbReference>
<dbReference type="GO" id="GO:0008017">
    <property type="term" value="F:microtubule binding"/>
    <property type="evidence" value="ECO:0000315"/>
    <property type="project" value="PomBase"/>
</dbReference>
<dbReference type="GO" id="GO:0004715">
    <property type="term" value="F:non-membrane spanning protein tyrosine kinase activity"/>
    <property type="evidence" value="ECO:0007669"/>
    <property type="project" value="UniProtKB-EC"/>
</dbReference>
<dbReference type="GO" id="GO:0004674">
    <property type="term" value="F:protein serine/threonine kinase activity"/>
    <property type="evidence" value="ECO:0000314"/>
    <property type="project" value="PomBase"/>
</dbReference>
<dbReference type="GO" id="GO:0004713">
    <property type="term" value="F:protein tyrosine kinase activity"/>
    <property type="evidence" value="ECO:0000314"/>
    <property type="project" value="PomBase"/>
</dbReference>
<dbReference type="GO" id="GO:0051301">
    <property type="term" value="P:cell division"/>
    <property type="evidence" value="ECO:0007669"/>
    <property type="project" value="UniProtKB-KW"/>
</dbReference>
<dbReference type="GO" id="GO:0044878">
    <property type="term" value="P:mitotic cytokinesis checkpoint signaling"/>
    <property type="evidence" value="ECO:0000315"/>
    <property type="project" value="PomBase"/>
</dbReference>
<dbReference type="GO" id="GO:0044773">
    <property type="term" value="P:mitotic DNA damage checkpoint signaling"/>
    <property type="evidence" value="ECO:0000316"/>
    <property type="project" value="PomBase"/>
</dbReference>
<dbReference type="GO" id="GO:0031569">
    <property type="term" value="P:mitotic G2 cell size control checkpoint signaling"/>
    <property type="evidence" value="ECO:0000315"/>
    <property type="project" value="PomBase"/>
</dbReference>
<dbReference type="GO" id="GO:0010972">
    <property type="term" value="P:negative regulation of G2/M transition of mitotic cell cycle"/>
    <property type="evidence" value="ECO:0000315"/>
    <property type="project" value="PomBase"/>
</dbReference>
<dbReference type="GO" id="GO:0110031">
    <property type="term" value="P:negative regulation of G2/MI transition of meiotic cell cycle"/>
    <property type="evidence" value="ECO:0000315"/>
    <property type="project" value="PomBase"/>
</dbReference>
<dbReference type="GO" id="GO:1902425">
    <property type="term" value="P:positive regulation of attachment of mitotic spindle microtubules to kinetochore"/>
    <property type="evidence" value="ECO:0000269"/>
    <property type="project" value="PomBase"/>
</dbReference>
<dbReference type="CDD" id="cd14052">
    <property type="entry name" value="PTKc_Wee1_fungi"/>
    <property type="match status" value="1"/>
</dbReference>
<dbReference type="FunFam" id="1.10.510.10:FF:000536">
    <property type="entry name" value="Cyclin-dependent kinase WEE1"/>
    <property type="match status" value="1"/>
</dbReference>
<dbReference type="Gene3D" id="3.30.200.20">
    <property type="entry name" value="Phosphorylase Kinase, domain 1"/>
    <property type="match status" value="1"/>
</dbReference>
<dbReference type="Gene3D" id="1.10.510.10">
    <property type="entry name" value="Transferase(Phosphotransferase) domain 1"/>
    <property type="match status" value="1"/>
</dbReference>
<dbReference type="InterPro" id="IPR050339">
    <property type="entry name" value="CC_SR_Kinase"/>
</dbReference>
<dbReference type="InterPro" id="IPR011009">
    <property type="entry name" value="Kinase-like_dom_sf"/>
</dbReference>
<dbReference type="InterPro" id="IPR000719">
    <property type="entry name" value="Prot_kinase_dom"/>
</dbReference>
<dbReference type="InterPro" id="IPR017441">
    <property type="entry name" value="Protein_kinase_ATP_BS"/>
</dbReference>
<dbReference type="InterPro" id="IPR008271">
    <property type="entry name" value="Ser/Thr_kinase_AS"/>
</dbReference>
<dbReference type="PANTHER" id="PTHR11042">
    <property type="entry name" value="EUKARYOTIC TRANSLATION INITIATION FACTOR 2-ALPHA KINASE EIF2-ALPHA KINASE -RELATED"/>
    <property type="match status" value="1"/>
</dbReference>
<dbReference type="PANTHER" id="PTHR11042:SF196">
    <property type="entry name" value="MITOSIS INHIBITOR PROTEIN KINASE SWE1"/>
    <property type="match status" value="1"/>
</dbReference>
<dbReference type="Pfam" id="PF00069">
    <property type="entry name" value="Pkinase"/>
    <property type="match status" value="1"/>
</dbReference>
<dbReference type="SMART" id="SM00220">
    <property type="entry name" value="S_TKc"/>
    <property type="match status" value="1"/>
</dbReference>
<dbReference type="SUPFAM" id="SSF56112">
    <property type="entry name" value="Protein kinase-like (PK-like)"/>
    <property type="match status" value="1"/>
</dbReference>
<dbReference type="PROSITE" id="PS00107">
    <property type="entry name" value="PROTEIN_KINASE_ATP"/>
    <property type="match status" value="1"/>
</dbReference>
<dbReference type="PROSITE" id="PS50011">
    <property type="entry name" value="PROTEIN_KINASE_DOM"/>
    <property type="match status" value="1"/>
</dbReference>
<dbReference type="PROSITE" id="PS00108">
    <property type="entry name" value="PROTEIN_KINASE_ST"/>
    <property type="match status" value="1"/>
</dbReference>
<protein>
    <recommendedName>
        <fullName>Mitosis inhibitor protein kinase wee1</fullName>
        <ecNumber>2.7.10.2</ecNumber>
    </recommendedName>
    <alternativeName>
        <fullName>P107 protein kinase homolog</fullName>
    </alternativeName>
</protein>
<organism>
    <name type="scientific">Schizosaccharomyces pombe (strain 972 / ATCC 24843)</name>
    <name type="common">Fission yeast</name>
    <dbReference type="NCBI Taxonomy" id="284812"/>
    <lineage>
        <taxon>Eukaryota</taxon>
        <taxon>Fungi</taxon>
        <taxon>Dikarya</taxon>
        <taxon>Ascomycota</taxon>
        <taxon>Taphrinomycotina</taxon>
        <taxon>Schizosaccharomycetes</taxon>
        <taxon>Schizosaccharomycetales</taxon>
        <taxon>Schizosaccharomycetaceae</taxon>
        <taxon>Schizosaccharomyces</taxon>
    </lineage>
</organism>
<feature type="chain" id="PRO_0000086815" description="Mitosis inhibitor protein kinase wee1">
    <location>
        <begin position="1"/>
        <end position="877"/>
    </location>
</feature>
<feature type="domain" description="Protein kinase" evidence="2">
    <location>
        <begin position="566"/>
        <end position="843"/>
    </location>
</feature>
<feature type="region of interest" description="Disordered" evidence="4">
    <location>
        <begin position="1"/>
        <end position="128"/>
    </location>
</feature>
<feature type="region of interest" description="Disordered" evidence="4">
    <location>
        <begin position="165"/>
        <end position="198"/>
    </location>
</feature>
<feature type="region of interest" description="Disordered" evidence="4">
    <location>
        <begin position="230"/>
        <end position="278"/>
    </location>
</feature>
<feature type="region of interest" description="Disordered" evidence="4">
    <location>
        <begin position="319"/>
        <end position="340"/>
    </location>
</feature>
<feature type="region of interest" description="Disordered" evidence="4">
    <location>
        <begin position="387"/>
        <end position="435"/>
    </location>
</feature>
<feature type="region of interest" description="Disordered" evidence="4">
    <location>
        <begin position="775"/>
        <end position="808"/>
    </location>
</feature>
<feature type="compositionally biased region" description="Low complexity" evidence="4">
    <location>
        <begin position="1"/>
        <end position="12"/>
    </location>
</feature>
<feature type="compositionally biased region" description="Polar residues" evidence="4">
    <location>
        <begin position="36"/>
        <end position="73"/>
    </location>
</feature>
<feature type="compositionally biased region" description="Polar residues" evidence="4">
    <location>
        <begin position="85"/>
        <end position="96"/>
    </location>
</feature>
<feature type="compositionally biased region" description="Low complexity" evidence="4">
    <location>
        <begin position="113"/>
        <end position="127"/>
    </location>
</feature>
<feature type="compositionally biased region" description="Polar residues" evidence="4">
    <location>
        <begin position="179"/>
        <end position="190"/>
    </location>
</feature>
<feature type="compositionally biased region" description="Low complexity" evidence="4">
    <location>
        <begin position="230"/>
        <end position="250"/>
    </location>
</feature>
<feature type="compositionally biased region" description="Polar residues" evidence="4">
    <location>
        <begin position="251"/>
        <end position="277"/>
    </location>
</feature>
<feature type="compositionally biased region" description="Polar residues" evidence="4">
    <location>
        <begin position="319"/>
        <end position="332"/>
    </location>
</feature>
<feature type="compositionally biased region" description="Low complexity" evidence="4">
    <location>
        <begin position="407"/>
        <end position="435"/>
    </location>
</feature>
<feature type="compositionally biased region" description="Low complexity" evidence="4">
    <location>
        <begin position="786"/>
        <end position="799"/>
    </location>
</feature>
<feature type="active site" description="Proton acceptor" evidence="2 3">
    <location>
        <position position="693"/>
    </location>
</feature>
<feature type="binding site" evidence="2">
    <location>
        <begin position="572"/>
        <end position="580"/>
    </location>
    <ligand>
        <name>ATP</name>
        <dbReference type="ChEBI" id="CHEBI:30616"/>
    </ligand>
</feature>
<feature type="binding site" evidence="2">
    <location>
        <position position="596"/>
    </location>
    <ligand>
        <name>ATP</name>
        <dbReference type="ChEBI" id="CHEBI:30616"/>
    </ligand>
</feature>
<feature type="binding site" evidence="1">
    <location>
        <position position="698"/>
    </location>
    <ligand>
        <name>Mg(2+)</name>
        <dbReference type="ChEBI" id="CHEBI:18420"/>
    </ligand>
</feature>
<feature type="binding site" evidence="1">
    <location>
        <position position="711"/>
    </location>
    <ligand>
        <name>Mg(2+)</name>
        <dbReference type="ChEBI" id="CHEBI:18420"/>
    </ligand>
</feature>
<feature type="mutagenesis site" description="Inactivates enzyme.">
    <original>K</original>
    <variation>L</variation>
    <location>
        <position position="596"/>
    </location>
</feature>
<accession>P07527</accession>
<accession>Q9UU00</accession>
<name>WEE1_SCHPO</name>
<evidence type="ECO:0000250" key="1"/>
<evidence type="ECO:0000255" key="2">
    <source>
        <dbReference type="PROSITE-ProRule" id="PRU00159"/>
    </source>
</evidence>
<evidence type="ECO:0000255" key="3">
    <source>
        <dbReference type="PROSITE-ProRule" id="PRU10027"/>
    </source>
</evidence>
<evidence type="ECO:0000256" key="4">
    <source>
        <dbReference type="SAM" id="MobiDB-lite"/>
    </source>
</evidence>
<evidence type="ECO:0000269" key="5">
    <source>
    </source>
</evidence>
<evidence type="ECO:0000269" key="6">
    <source>
    </source>
</evidence>
<gene>
    <name type="primary">wee1</name>
    <name type="ORF">SPCC18B5.03</name>
</gene>
<comment type="function">
    <text evidence="6">Protein kinase that acts both on serines and on tyrosines. It acts as a dosage-dependent negative regulator of entry into mitosis (G2 to M transition). Phosphorylates and inhibits cdc2.</text>
</comment>
<comment type="catalytic activity">
    <reaction evidence="3">
        <text>L-tyrosyl-[protein] + ATP = O-phospho-L-tyrosyl-[protein] + ADP + H(+)</text>
        <dbReference type="Rhea" id="RHEA:10596"/>
        <dbReference type="Rhea" id="RHEA-COMP:10136"/>
        <dbReference type="Rhea" id="RHEA-COMP:20101"/>
        <dbReference type="ChEBI" id="CHEBI:15378"/>
        <dbReference type="ChEBI" id="CHEBI:30616"/>
        <dbReference type="ChEBI" id="CHEBI:46858"/>
        <dbReference type="ChEBI" id="CHEBI:61978"/>
        <dbReference type="ChEBI" id="CHEBI:456216"/>
        <dbReference type="EC" id="2.7.10.2"/>
    </reaction>
</comment>
<comment type="cofactor">
    <cofactor evidence="1">
        <name>Mg(2+)</name>
        <dbReference type="ChEBI" id="CHEBI:18420"/>
    </cofactor>
    <text evidence="1">Binds 2 magnesium ions per subunit.</text>
</comment>
<comment type="activity regulation">
    <text>Negatively regulated by phosphorylation in the M-phase.</text>
</comment>
<comment type="subcellular location">
    <subcellularLocation>
        <location evidence="5">Nucleus</location>
    </subcellularLocation>
</comment>
<comment type="PTM">
    <text>Phosphorylated in the C-terminal by NIM1/CDR1.</text>
</comment>
<comment type="similarity">
    <text evidence="2">Belongs to the protein kinase superfamily. Ser/Thr protein kinase family. WEE1 subfamily.</text>
</comment>
<reference key="1">
    <citation type="journal article" date="1987" name="Cell">
        <title>Negative regulation of mitosis by wee1+, a gene encoding a protein kinase homolog.</title>
        <authorList>
            <person name="Russell P."/>
            <person name="Nurse P."/>
        </authorList>
    </citation>
    <scope>NUCLEOTIDE SEQUENCE [GENOMIC DNA]</scope>
</reference>
<reference key="2">
    <citation type="journal article" date="2002" name="Nature">
        <title>The genome sequence of Schizosaccharomyces pombe.</title>
        <authorList>
            <person name="Wood V."/>
            <person name="Gwilliam R."/>
            <person name="Rajandream M.A."/>
            <person name="Lyne M.H."/>
            <person name="Lyne R."/>
            <person name="Stewart A."/>
            <person name="Sgouros J.G."/>
            <person name="Peat N."/>
            <person name="Hayles J."/>
            <person name="Baker S.G."/>
            <person name="Basham D."/>
            <person name="Bowman S."/>
            <person name="Brooks K."/>
            <person name="Brown D."/>
            <person name="Brown S."/>
            <person name="Chillingworth T."/>
            <person name="Churcher C.M."/>
            <person name="Collins M."/>
            <person name="Connor R."/>
            <person name="Cronin A."/>
            <person name="Davis P."/>
            <person name="Feltwell T."/>
            <person name="Fraser A."/>
            <person name="Gentles S."/>
            <person name="Goble A."/>
            <person name="Hamlin N."/>
            <person name="Harris D.E."/>
            <person name="Hidalgo J."/>
            <person name="Hodgson G."/>
            <person name="Holroyd S."/>
            <person name="Hornsby T."/>
            <person name="Howarth S."/>
            <person name="Huckle E.J."/>
            <person name="Hunt S."/>
            <person name="Jagels K."/>
            <person name="James K.D."/>
            <person name="Jones L."/>
            <person name="Jones M."/>
            <person name="Leather S."/>
            <person name="McDonald S."/>
            <person name="McLean J."/>
            <person name="Mooney P."/>
            <person name="Moule S."/>
            <person name="Mungall K.L."/>
            <person name="Murphy L.D."/>
            <person name="Niblett D."/>
            <person name="Odell C."/>
            <person name="Oliver K."/>
            <person name="O'Neil S."/>
            <person name="Pearson D."/>
            <person name="Quail M.A."/>
            <person name="Rabbinowitsch E."/>
            <person name="Rutherford K.M."/>
            <person name="Rutter S."/>
            <person name="Saunders D."/>
            <person name="Seeger K."/>
            <person name="Sharp S."/>
            <person name="Skelton J."/>
            <person name="Simmonds M.N."/>
            <person name="Squares R."/>
            <person name="Squares S."/>
            <person name="Stevens K."/>
            <person name="Taylor K."/>
            <person name="Taylor R.G."/>
            <person name="Tivey A."/>
            <person name="Walsh S.V."/>
            <person name="Warren T."/>
            <person name="Whitehead S."/>
            <person name="Woodward J.R."/>
            <person name="Volckaert G."/>
            <person name="Aert R."/>
            <person name="Robben J."/>
            <person name="Grymonprez B."/>
            <person name="Weltjens I."/>
            <person name="Vanstreels E."/>
            <person name="Rieger M."/>
            <person name="Schaefer M."/>
            <person name="Mueller-Auer S."/>
            <person name="Gabel C."/>
            <person name="Fuchs M."/>
            <person name="Duesterhoeft A."/>
            <person name="Fritzc C."/>
            <person name="Holzer E."/>
            <person name="Moestl D."/>
            <person name="Hilbert H."/>
            <person name="Borzym K."/>
            <person name="Langer I."/>
            <person name="Beck A."/>
            <person name="Lehrach H."/>
            <person name="Reinhardt R."/>
            <person name="Pohl T.M."/>
            <person name="Eger P."/>
            <person name="Zimmermann W."/>
            <person name="Wedler H."/>
            <person name="Wambutt R."/>
            <person name="Purnelle B."/>
            <person name="Goffeau A."/>
            <person name="Cadieu E."/>
            <person name="Dreano S."/>
            <person name="Gloux S."/>
            <person name="Lelaure V."/>
            <person name="Mottier S."/>
            <person name="Galibert F."/>
            <person name="Aves S.J."/>
            <person name="Xiang Z."/>
            <person name="Hunt C."/>
            <person name="Moore K."/>
            <person name="Hurst S.M."/>
            <person name="Lucas M."/>
            <person name="Rochet M."/>
            <person name="Gaillardin C."/>
            <person name="Tallada V.A."/>
            <person name="Garzon A."/>
            <person name="Thode G."/>
            <person name="Daga R.R."/>
            <person name="Cruzado L."/>
            <person name="Jimenez J."/>
            <person name="Sanchez M."/>
            <person name="del Rey F."/>
            <person name="Benito J."/>
            <person name="Dominguez A."/>
            <person name="Revuelta J.L."/>
            <person name="Moreno S."/>
            <person name="Armstrong J."/>
            <person name="Forsburg S.L."/>
            <person name="Cerutti L."/>
            <person name="Lowe T."/>
            <person name="McCombie W.R."/>
            <person name="Paulsen I."/>
            <person name="Potashkin J."/>
            <person name="Shpakovski G.V."/>
            <person name="Ussery D."/>
            <person name="Barrell B.G."/>
            <person name="Nurse P."/>
        </authorList>
    </citation>
    <scope>NUCLEOTIDE SEQUENCE [LARGE SCALE GENOMIC DNA]</scope>
    <source>
        <strain>972 / ATCC 24843</strain>
    </source>
</reference>
<reference key="3">
    <citation type="journal article" date="2000" name="Genes Cells">
        <title>Large-scale screening of intracellular protein localization in living fission yeast cells by the use of a GFP-fusion genomic DNA library.</title>
        <authorList>
            <person name="Ding D.-Q."/>
            <person name="Tomita Y."/>
            <person name="Yamamoto A."/>
            <person name="Chikashige Y."/>
            <person name="Haraguchi T."/>
            <person name="Hiraoka Y."/>
        </authorList>
    </citation>
    <scope>NUCLEOTIDE SEQUENCE [LARGE SCALE GENOMIC DNA] OF 406-625</scope>
    <scope>SUBCELLULAR LOCATION</scope>
    <source>
        <strain>ATCC 38364 / 968</strain>
    </source>
</reference>
<reference key="4">
    <citation type="journal article" date="1991" name="Nature">
        <title>Fission yeast p107wee1 mitotic inhibitor is a tyrosine/serine kinase.</title>
        <authorList>
            <person name="Featherstone C."/>
            <person name="Russell P."/>
        </authorList>
    </citation>
    <scope>FUNCTION</scope>
</reference>
<keyword id="KW-0067">ATP-binding</keyword>
<keyword id="KW-0131">Cell cycle</keyword>
<keyword id="KW-0132">Cell division</keyword>
<keyword id="KW-0418">Kinase</keyword>
<keyword id="KW-0460">Magnesium</keyword>
<keyword id="KW-0479">Metal-binding</keyword>
<keyword id="KW-0498">Mitosis</keyword>
<keyword id="KW-0547">Nucleotide-binding</keyword>
<keyword id="KW-0539">Nucleus</keyword>
<keyword id="KW-0597">Phosphoprotein</keyword>
<keyword id="KW-1185">Reference proteome</keyword>
<keyword id="KW-0808">Transferase</keyword>
<keyword id="KW-0829">Tyrosine-protein kinase</keyword>